<feature type="chain" id="PRO_0000183602" description="Cytochrome c oxidase subunit 2">
    <location>
        <begin position="1"/>
        <end position="64" status="greater than"/>
    </location>
</feature>
<feature type="topological domain" description="Mitochondrial intermembrane" evidence="3">
    <location>
        <begin position="1"/>
        <end position="14"/>
    </location>
</feature>
<feature type="transmembrane region" description="Helical; Name=I" evidence="3">
    <location>
        <begin position="15"/>
        <end position="45"/>
    </location>
</feature>
<feature type="topological domain" description="Mitochondrial matrix" evidence="3">
    <location>
        <begin position="46"/>
        <end position="64" status="greater than"/>
    </location>
</feature>
<feature type="non-terminal residue">
    <location>
        <position position="64"/>
    </location>
</feature>
<keyword id="KW-0186">Copper</keyword>
<keyword id="KW-0249">Electron transport</keyword>
<keyword id="KW-0472">Membrane</keyword>
<keyword id="KW-0496">Mitochondrion</keyword>
<keyword id="KW-0999">Mitochondrion inner membrane</keyword>
<keyword id="KW-0679">Respiratory chain</keyword>
<keyword id="KW-1278">Translocase</keyword>
<keyword id="KW-0812">Transmembrane</keyword>
<keyword id="KW-1133">Transmembrane helix</keyword>
<keyword id="KW-0813">Transport</keyword>
<sequence>MAHPSQLGFQDAASPMMEELLHFHDHALMVVFLISTFVLYIILTMLTTKLTDKLILESHEIEII</sequence>
<dbReference type="EC" id="7.1.1.9"/>
<dbReference type="EMBL" id="M64892">
    <property type="protein sequence ID" value="AAB01458.1"/>
    <property type="status" value="ALT_SEQ"/>
    <property type="molecule type" value="Genomic_DNA"/>
</dbReference>
<dbReference type="PIR" id="T09849">
    <property type="entry name" value="T09849"/>
</dbReference>
<dbReference type="SMR" id="P29657"/>
<dbReference type="GO" id="GO:0005743">
    <property type="term" value="C:mitochondrial inner membrane"/>
    <property type="evidence" value="ECO:0007669"/>
    <property type="project" value="UniProtKB-SubCell"/>
</dbReference>
<dbReference type="GO" id="GO:0045277">
    <property type="term" value="C:respiratory chain complex IV"/>
    <property type="evidence" value="ECO:0000250"/>
    <property type="project" value="UniProtKB"/>
</dbReference>
<dbReference type="GO" id="GO:0004129">
    <property type="term" value="F:cytochrome-c oxidase activity"/>
    <property type="evidence" value="ECO:0007669"/>
    <property type="project" value="UniProtKB-EC"/>
</dbReference>
<dbReference type="GO" id="GO:0022900">
    <property type="term" value="P:electron transport chain"/>
    <property type="evidence" value="ECO:0007669"/>
    <property type="project" value="InterPro"/>
</dbReference>
<dbReference type="Gene3D" id="1.10.287.90">
    <property type="match status" value="1"/>
</dbReference>
<dbReference type="InterPro" id="IPR011759">
    <property type="entry name" value="Cyt_c_oxidase_su2_TM_dom"/>
</dbReference>
<dbReference type="InterPro" id="IPR036257">
    <property type="entry name" value="Cyt_c_oxidase_su2_TM_sf"/>
</dbReference>
<dbReference type="Pfam" id="PF02790">
    <property type="entry name" value="COX2_TM"/>
    <property type="match status" value="1"/>
</dbReference>
<dbReference type="SUPFAM" id="SSF81464">
    <property type="entry name" value="Cytochrome c oxidase subunit II-like, transmembrane region"/>
    <property type="match status" value="1"/>
</dbReference>
<dbReference type="PROSITE" id="PS50999">
    <property type="entry name" value="COX2_TM"/>
    <property type="match status" value="1"/>
</dbReference>
<proteinExistence type="inferred from homology"/>
<evidence type="ECO:0000250" key="1">
    <source>
        <dbReference type="UniProtKB" id="P00403"/>
    </source>
</evidence>
<evidence type="ECO:0000250" key="2">
    <source>
        <dbReference type="UniProtKB" id="P00410"/>
    </source>
</evidence>
<evidence type="ECO:0000250" key="3">
    <source>
        <dbReference type="UniProtKB" id="P68530"/>
    </source>
</evidence>
<evidence type="ECO:0000305" key="4"/>
<protein>
    <recommendedName>
        <fullName>Cytochrome c oxidase subunit 2</fullName>
        <ecNumber>7.1.1.9</ecNumber>
    </recommendedName>
    <alternativeName>
        <fullName>Cytochrome c oxidase polypeptide II</fullName>
    </alternativeName>
</protein>
<gene>
    <name type="primary">mt-co2</name>
    <name type="synonym">coii</name>
    <name type="synonym">coxii</name>
    <name type="synonym">mtco2</name>
</gene>
<comment type="function">
    <text evidence="2">Component of the cytochrome c oxidase, the last enzyme in the mitochondrial electron transport chain which drives oxidative phosphorylation. The respiratory chain contains 3 multisubunit complexes succinate dehydrogenase (complex II, CII), ubiquinol-cytochrome c oxidoreductase (cytochrome b-c1 complex, complex III, CIII) and cytochrome c oxidase (complex IV, CIV), that cooperate to transfer electrons derived from NADH and succinate to molecular oxygen, creating an electrochemical gradient over the inner membrane that drives transmembrane transport and the ATP synthase. Cytochrome c oxidase is the component of the respiratory chain that catalyzes the reduction of oxygen to water. Electrons originating from reduced cytochrome c in the intermembrane space (IMS) are transferred via the dinuclear copper A center (CU(A)) of subunit 2 and heme A of subunit 1 to the active site in subunit 1, a binuclear center (BNC) formed by heme A3 and copper B (CU(B)). The BNC reduces molecular oxygen to 2 water molecules using 4 electrons from cytochrome c in the IMS and 4 protons from the mitochondrial matrix.</text>
</comment>
<comment type="catalytic activity">
    <reaction evidence="2">
        <text>4 Fe(II)-[cytochrome c] + O2 + 8 H(+)(in) = 4 Fe(III)-[cytochrome c] + 2 H2O + 4 H(+)(out)</text>
        <dbReference type="Rhea" id="RHEA:11436"/>
        <dbReference type="Rhea" id="RHEA-COMP:10350"/>
        <dbReference type="Rhea" id="RHEA-COMP:14399"/>
        <dbReference type="ChEBI" id="CHEBI:15377"/>
        <dbReference type="ChEBI" id="CHEBI:15378"/>
        <dbReference type="ChEBI" id="CHEBI:15379"/>
        <dbReference type="ChEBI" id="CHEBI:29033"/>
        <dbReference type="ChEBI" id="CHEBI:29034"/>
        <dbReference type="EC" id="7.1.1.9"/>
    </reaction>
    <physiologicalReaction direction="left-to-right" evidence="2">
        <dbReference type="Rhea" id="RHEA:11437"/>
    </physiologicalReaction>
</comment>
<comment type="cofactor">
    <cofactor evidence="3">
        <name>Cu cation</name>
        <dbReference type="ChEBI" id="CHEBI:23378"/>
    </cofactor>
    <text evidence="3">Binds a dinuclear copper A center per subunit.</text>
</comment>
<comment type="subunit">
    <text evidence="1 3">Component of the cytochrome c oxidase (complex IV, CIV), a multisubunit enzyme composed of 14 subunits. The complex is composed of a catalytic core of 3 subunits MT-CO1, MT-CO2 and MT-CO3, encoded in the mitochondrial DNA, and 11 supernumerary subunits COX4I, COX5A, COX5B, COX6A, COX6B, COX6C, COX7A, COX7B, COX7C, COX8 and NDUFA4, which are encoded in the nuclear genome. The complex exists as a monomer or a dimer and forms supercomplexes (SCs) in the inner mitochondrial membrane with NADH-ubiquinone oxidoreductase (complex I, CI) and ubiquinol-cytochrome c oxidoreductase (cytochrome b-c1 complex, complex III, CIII), resulting in different assemblies (supercomplex SCI(1)III(2)IV(1) and megacomplex MCI(2)III(2)IV(2)) (By similarity). Found in a complex with TMEM177, COA6, COX18, COX20, SCO1 and SCO2. Interacts with TMEM177 in a COX20-dependent manner. Interacts with COX20. Interacts with COX16 (By similarity).</text>
</comment>
<comment type="subcellular location">
    <subcellularLocation>
        <location evidence="3">Mitochondrion inner membrane</location>
        <topology evidence="3">Multi-pass membrane protein</topology>
    </subcellularLocation>
</comment>
<comment type="similarity">
    <text evidence="4">Belongs to the cytochrome c oxidase subunit 2 family.</text>
</comment>
<accession>P29657</accession>
<reference key="1">
    <citation type="journal article" date="1991" name="Mol. Biol. Evol.">
        <title>Phylogenetic relationships of neopterygian fishes, inferred from mitochondrial DNA sequences.</title>
        <authorList>
            <person name="Normark B.B."/>
            <person name="McCune A.R."/>
            <person name="Harrison R.G."/>
        </authorList>
    </citation>
    <scope>NUCLEOTIDE SEQUENCE [GENOMIC DNA]</scope>
</reference>
<organism>
    <name type="scientific">Geophagus steindachneri</name>
    <name type="common">Red hump earth eater</name>
    <dbReference type="NCBI Taxonomy" id="13074"/>
    <lineage>
        <taxon>Eukaryota</taxon>
        <taxon>Metazoa</taxon>
        <taxon>Chordata</taxon>
        <taxon>Craniata</taxon>
        <taxon>Vertebrata</taxon>
        <taxon>Euteleostomi</taxon>
        <taxon>Actinopterygii</taxon>
        <taxon>Neopterygii</taxon>
        <taxon>Teleostei</taxon>
        <taxon>Neoteleostei</taxon>
        <taxon>Acanthomorphata</taxon>
        <taxon>Ovalentaria</taxon>
        <taxon>Cichlomorphae</taxon>
        <taxon>Cichliformes</taxon>
        <taxon>Cichlidae</taxon>
        <taxon>New World cichlids</taxon>
        <taxon>Geophaginae</taxon>
        <taxon>Geophagini</taxon>
        <taxon>Geophagus</taxon>
    </lineage>
</organism>
<geneLocation type="mitochondrion"/>
<name>COX2_GEOSD</name>